<protein>
    <recommendedName>
        <fullName>Eukaryotic peptide chain release factor subunit 1</fullName>
        <shortName>Eukaryotic release factor 1</shortName>
        <shortName>eRF1</shortName>
    </recommendedName>
</protein>
<gene>
    <name type="primary">ERF1</name>
</gene>
<keyword id="KW-0963">Cytoplasm</keyword>
<keyword id="KW-0648">Protein biosynthesis</keyword>
<organism>
    <name type="scientific">Stylonychia lemnae</name>
    <name type="common">Ciliate</name>
    <dbReference type="NCBI Taxonomy" id="5949"/>
    <lineage>
        <taxon>Eukaryota</taxon>
        <taxon>Sar</taxon>
        <taxon>Alveolata</taxon>
        <taxon>Ciliophora</taxon>
        <taxon>Intramacronucleata</taxon>
        <taxon>Spirotrichea</taxon>
        <taxon>Stichotrichia</taxon>
        <taxon>Sporadotrichida</taxon>
        <taxon>Oxytrichidae</taxon>
        <taxon>Stylonychinae</taxon>
        <taxon>Stylonychia</taxon>
    </lineage>
</organism>
<sequence>MVESIAAGQVGDNKHIEMWKIKRLINKLENCKGNGTSMVSLIIPPKEDINKSGKLLVGELSAAQNIKSRITRQSVITAITSTKEKLKLYRQTPTNGLCIYCGVILMEDGKTEKKINFDFEPFRPINQFMYFCGGKFQTEPLTTLLADDDKFGFIIVDGNGALYATLQGNSREILQKITVELPKKHRKGGQSSVRFARLREEKRHNYLRKVAELAGSNFITNDKPNVTGLVLAGNAGFKNELSETDMLDKRLLPIIVSIVDVSYGGENGLNEAITLSADALTNVKFVAEKKLVSTFFEQISLDTGMIVFGVQDTMKALELGAVETILLFEELEITRYVIKNPVKGDTRTLFLNPTQQKDSKYFKDQASGLDMDVIAEDQLAEWLCHNYQNYGAQVEFITDKSQEGYQFVKGFGGIGGFLRYKVDMEDALGDVGDGGDDFDPDTDFI</sequence>
<proteinExistence type="inferred from homology"/>
<accession>Q9BMM0</accession>
<name>ERF1_STYLE</name>
<reference key="1">
    <citation type="journal article" date="2001" name="Curr. Biol.">
        <title>The molecular basis of nuclear genetic code change in ciliates.</title>
        <authorList>
            <person name="Lozupone C.A."/>
            <person name="Knight R.D."/>
            <person name="Landweber L.F."/>
        </authorList>
    </citation>
    <scope>NUCLEOTIDE SEQUENCE [GENOMIC DNA]</scope>
</reference>
<feature type="chain" id="PRO_0000143158" description="Eukaryotic peptide chain release factor subunit 1">
    <location>
        <begin position="1"/>
        <end position="445"/>
    </location>
</feature>
<evidence type="ECO:0000305" key="1"/>
<dbReference type="EMBL" id="AF317834">
    <property type="protein sequence ID" value="AAK12092.1"/>
    <property type="molecule type" value="Genomic_DNA"/>
</dbReference>
<dbReference type="SMR" id="Q9BMM0"/>
<dbReference type="OMA" id="GPGTEKM"/>
<dbReference type="OrthoDB" id="10254527at2759"/>
<dbReference type="GO" id="GO:0005737">
    <property type="term" value="C:cytoplasm"/>
    <property type="evidence" value="ECO:0007669"/>
    <property type="project" value="UniProtKB-SubCell"/>
</dbReference>
<dbReference type="GO" id="GO:0003747">
    <property type="term" value="F:translation release factor activity"/>
    <property type="evidence" value="ECO:0007669"/>
    <property type="project" value="InterPro"/>
</dbReference>
<dbReference type="FunFam" id="3.30.1330.30:FF:000006">
    <property type="entry name" value="Peptide chain release factor subunit 1"/>
    <property type="match status" value="1"/>
</dbReference>
<dbReference type="FunFam" id="3.30.420.60:FF:000003">
    <property type="entry name" value="Peptide chain release factor subunit 1"/>
    <property type="match status" value="1"/>
</dbReference>
<dbReference type="Gene3D" id="3.30.1330.30">
    <property type="match status" value="1"/>
</dbReference>
<dbReference type="Gene3D" id="3.30.960.10">
    <property type="entry name" value="eRF1 domain 1"/>
    <property type="match status" value="1"/>
</dbReference>
<dbReference type="Gene3D" id="3.30.420.60">
    <property type="entry name" value="eRF1 domain 2"/>
    <property type="match status" value="1"/>
</dbReference>
<dbReference type="InterPro" id="IPR042226">
    <property type="entry name" value="eFR1_2_sf"/>
</dbReference>
<dbReference type="InterPro" id="IPR005140">
    <property type="entry name" value="eRF1_1_Pelota"/>
</dbReference>
<dbReference type="InterPro" id="IPR024049">
    <property type="entry name" value="eRF1_1_sf"/>
</dbReference>
<dbReference type="InterPro" id="IPR005141">
    <property type="entry name" value="eRF1_2"/>
</dbReference>
<dbReference type="InterPro" id="IPR005142">
    <property type="entry name" value="eRF1_3"/>
</dbReference>
<dbReference type="InterPro" id="IPR004403">
    <property type="entry name" value="Peptide_chain-rel_eRF1/aRF1"/>
</dbReference>
<dbReference type="InterPro" id="IPR029064">
    <property type="entry name" value="Ribosomal_eL30-like_sf"/>
</dbReference>
<dbReference type="NCBIfam" id="TIGR03676">
    <property type="entry name" value="aRF1_eRF1"/>
    <property type="match status" value="1"/>
</dbReference>
<dbReference type="PANTHER" id="PTHR10113">
    <property type="entry name" value="PEPTIDE CHAIN RELEASE FACTOR SUBUNIT 1"/>
    <property type="match status" value="1"/>
</dbReference>
<dbReference type="Pfam" id="PF03463">
    <property type="entry name" value="eRF1_1"/>
    <property type="match status" value="1"/>
</dbReference>
<dbReference type="Pfam" id="PF03464">
    <property type="entry name" value="eRF1_2"/>
    <property type="match status" value="1"/>
</dbReference>
<dbReference type="Pfam" id="PF03465">
    <property type="entry name" value="eRF1_3"/>
    <property type="match status" value="1"/>
</dbReference>
<dbReference type="SMART" id="SM01194">
    <property type="entry name" value="eRF1_1"/>
    <property type="match status" value="1"/>
</dbReference>
<dbReference type="SUPFAM" id="SSF55315">
    <property type="entry name" value="L30e-like"/>
    <property type="match status" value="1"/>
</dbReference>
<dbReference type="SUPFAM" id="SSF55481">
    <property type="entry name" value="N-terminal domain of eukaryotic peptide chain release factor subunit 1, ERF1"/>
    <property type="match status" value="1"/>
</dbReference>
<dbReference type="SUPFAM" id="SSF53137">
    <property type="entry name" value="Translational machinery components"/>
    <property type="match status" value="1"/>
</dbReference>
<comment type="function">
    <text>Directs the termination of nascent peptide synthesis (translation) in response to the termination codon UGA. In Stylonchia UAA and UAG codes for glutamine.</text>
</comment>
<comment type="subunit">
    <text>Heterodimer of two subunits, one of which binds GTP.</text>
</comment>
<comment type="subcellular location">
    <subcellularLocation>
        <location>Cytoplasm</location>
    </subcellularLocation>
</comment>
<comment type="similarity">
    <text evidence="1">Belongs to the eukaryotic release factor 1 family.</text>
</comment>